<keyword id="KW-0216">Detoxification</keyword>
<keyword id="KW-0903">Direct protein sequencing</keyword>
<keyword id="KW-0325">Glycoprotein</keyword>
<keyword id="KW-0456">Lyase</keyword>
<keyword id="KW-0964">Secreted</keyword>
<keyword id="KW-0732">Signal</keyword>
<dbReference type="EC" id="4.2.1.95"/>
<dbReference type="EMBL" id="L39639">
    <property type="protein sequence ID" value="AAA87627.1"/>
    <property type="molecule type" value="Genomic_DNA"/>
</dbReference>
<dbReference type="SMR" id="Q00870"/>
<dbReference type="KEGG" id="ag:AAA87627"/>
<dbReference type="BioCyc" id="MetaCyc:MONOMER-19168"/>
<dbReference type="BRENDA" id="4.2.1.95">
    <property type="organism ID" value="2361"/>
</dbReference>
<dbReference type="GO" id="GO:0005576">
    <property type="term" value="C:extracellular region"/>
    <property type="evidence" value="ECO:0007669"/>
    <property type="project" value="UniProtKB-SubCell"/>
</dbReference>
<dbReference type="GO" id="GO:0050015">
    <property type="term" value="F:kievitone hydratase activity"/>
    <property type="evidence" value="ECO:0000314"/>
    <property type="project" value="UniProtKB"/>
</dbReference>
<dbReference type="GO" id="GO:0051410">
    <property type="term" value="P:detoxification of nitrogen compound"/>
    <property type="evidence" value="ECO:0000314"/>
    <property type="project" value="UniProtKB"/>
</dbReference>
<dbReference type="GO" id="GO:0052316">
    <property type="term" value="P:phytoalexin catabolic process"/>
    <property type="evidence" value="ECO:0000314"/>
    <property type="project" value="UniProtKB"/>
</dbReference>
<dbReference type="Gene3D" id="2.40.370.10">
    <property type="entry name" value="AttH-like domain"/>
    <property type="match status" value="2"/>
</dbReference>
<dbReference type="InterPro" id="IPR023374">
    <property type="entry name" value="AttH-like_dom_sf"/>
</dbReference>
<dbReference type="InterPro" id="IPR053112">
    <property type="entry name" value="Fungal_Dehydratase/Hydratase"/>
</dbReference>
<dbReference type="PANTHER" id="PTHR40617:SF1">
    <property type="entry name" value="ATTH DOMAIN-CONTAINING PROTEIN-RELATED"/>
    <property type="match status" value="1"/>
</dbReference>
<dbReference type="PANTHER" id="PTHR40617">
    <property type="entry name" value="TERPENE CYCLASE ASQC"/>
    <property type="match status" value="1"/>
</dbReference>
<dbReference type="Pfam" id="PF17186">
    <property type="entry name" value="Lipocalin_9"/>
    <property type="match status" value="1"/>
</dbReference>
<dbReference type="SUPFAM" id="SSF159245">
    <property type="entry name" value="AttH-like"/>
    <property type="match status" value="1"/>
</dbReference>
<organism>
    <name type="scientific">Fusarium solani subsp. phaseoli</name>
    <name type="common">Nectria haematococca</name>
    <dbReference type="NCBI Taxonomy" id="120645"/>
    <lineage>
        <taxon>Eukaryota</taxon>
        <taxon>Fungi</taxon>
        <taxon>Dikarya</taxon>
        <taxon>Ascomycota</taxon>
        <taxon>Pezizomycotina</taxon>
        <taxon>Sordariomycetes</taxon>
        <taxon>Hypocreomycetidae</taxon>
        <taxon>Hypocreales</taxon>
        <taxon>Nectriaceae</taxon>
        <taxon>Fusarium</taxon>
        <taxon>Fusarium solani species complex</taxon>
    </lineage>
</organism>
<gene>
    <name type="primary">khs</name>
</gene>
<name>KHS_FUSSH</name>
<protein>
    <recommendedName>
        <fullName>Kievitone hydratase</fullName>
        <shortName>KHase</shortName>
        <ecNumber>4.2.1.95</ecNumber>
    </recommendedName>
</protein>
<feature type="signal peptide" evidence="1">
    <location>
        <begin position="1"/>
        <end position="19"/>
    </location>
</feature>
<feature type="chain" id="PRO_5000142792" description="Kievitone hydratase">
    <location>
        <begin position="20"/>
        <end position="350"/>
    </location>
</feature>
<accession>Q00870</accession>
<proteinExistence type="evidence at protein level"/>
<sequence length="350" mass="38970">MMISSVLVAGVVAVSAALASKHPKQYSFKPEDAETIWNGDIPVLYDFGDSQSASYSGSWWTSSYITGTNGEQYLVISHYLDTPVFTYFRASTLNLETLDYNQFITLGNNTANSTTLDVKVGDNGIQSLTADNISQQRAYANDENVTFDITFDATSRVISNAGAGVFQFGPSITYEWGLPNCRTQGSVTDTGGKNITVDPAKSFTWYDRQWGTAAVTSGNWTWFQMHIPETSYKLSVWIIDNDVTNQFSRFATIRGDNDEFQVLPLEWKPIYDRTYQSTAADILYPLDWELDISGFGVFQLSSILDDQEIVGTTAIQTAYEGFVTFNGTVHNKKVQGYGLVEVVYSNWESL</sequence>
<comment type="function">
    <text evidence="1 2">Converts fungitoxic kievitone to the less toxic kievitone hydrate, and thereby protects the pathogenic fungus against this phytoalexin.</text>
</comment>
<comment type="catalytic activity">
    <reaction evidence="1 2">
        <text>kievitone hydrate = kievitone + H2O</text>
        <dbReference type="Rhea" id="RHEA:23604"/>
        <dbReference type="ChEBI" id="CHEBI:15377"/>
        <dbReference type="ChEBI" id="CHEBI:16832"/>
        <dbReference type="ChEBI" id="CHEBI:17529"/>
        <dbReference type="EC" id="4.2.1.95"/>
    </reaction>
</comment>
<comment type="subunit">
    <text evidence="1">Homodimer.</text>
</comment>
<comment type="subcellular location">
    <subcellularLocation>
        <location evidence="1 2">Secreted</location>
    </subcellularLocation>
</comment>
<comment type="induction">
    <text evidence="1 2">Up-regulated by biochanin and phaseollinisoflavan.</text>
</comment>
<comment type="PTM">
    <text evidence="1">Glycosylated.</text>
</comment>
<reference key="1">
    <citation type="journal article" date="1995" name="Mol. Plant Microbe Interact.">
        <title>The Fusarium solani gene encoding kievitone hydratase, a secreted enzyme that catalyzes detoxification of a bean phytoalexin.</title>
        <authorList>
            <person name="Li D."/>
            <person name="Chung K.R."/>
            <person name="Smith D.A."/>
            <person name="Schardl C.L."/>
        </authorList>
    </citation>
    <scope>NUCLEOTIDE SEQUENCE [GENOMIC DNA]</scope>
    <scope>CATALYTIC ACTIVITY</scope>
    <scope>FUNCTION</scope>
    <scope>INDUCTION</scope>
    <scope>SUBCELLULAR LOCATION</scope>
    <source>
        <strain>ATCC 60860 / FB</strain>
        <tissue>Mycelium</tissue>
    </source>
</reference>
<reference key="2">
    <citation type="journal article" date="1990" name="Phytochemistry">
        <title>Induction and purification of kievitone hydratase from Fusarium solani f. sp. phaseoli.</title>
        <authorList>
            <person name="Turbek C.S."/>
            <person name="Li D.X."/>
            <person name="Choi G.H."/>
            <person name="Schardl C.L."/>
            <person name="Smith D.A."/>
        </authorList>
    </citation>
    <scope>PROTEIN SEQUENCE OF N-TERMINUS</scope>
    <scope>SUBCELLULAR LOCATION</scope>
    <scope>CATALYTIC ACTIVITY</scope>
    <scope>FUNCTION</scope>
    <scope>INDUCTION</scope>
    <scope>SUBUNIT</scope>
    <scope>GLYCOSYLATION</scope>
</reference>
<evidence type="ECO:0000269" key="1">
    <source>
    </source>
</evidence>
<evidence type="ECO:0000269" key="2">
    <source>
    </source>
</evidence>